<gene>
    <name type="primary">CTH</name>
</gene>
<protein>
    <recommendedName>
        <fullName>Cystathionine gamma-lyase</fullName>
        <shortName>CGL</shortName>
        <shortName>CSE</shortName>
        <ecNumber>4.4.1.1</ecNumber>
    </recommendedName>
    <alternativeName>
        <fullName>Cysteine desulfhydrase</fullName>
    </alternativeName>
    <alternativeName>
        <fullName>Cysteine-protein sulfhydrase</fullName>
    </alternativeName>
    <alternativeName>
        <fullName>Gamma-cystathionase</fullName>
    </alternativeName>
    <alternativeName>
        <fullName>Homocysteine desulfhydrase</fullName>
        <ecNumber evidence="3">4.4.1.2</ecNumber>
    </alternativeName>
</protein>
<reference key="1">
    <citation type="journal article" date="2006" name="Anim. Genet.">
        <title>A gene-based radiation hybrid map of the pig chromosome 6q32 region associated with a QTL for fat deposition traits.</title>
        <authorList>
            <person name="Kim J.H."/>
            <person name="Lim H.T."/>
            <person name="Park E.W."/>
            <person name="Ovilo C."/>
            <person name="Lee J.H."/>
            <person name="Jeon J.T."/>
        </authorList>
    </citation>
    <scope>NUCLEOTIDE SEQUENCE [MRNA]</scope>
</reference>
<feature type="chain" id="PRO_0000289803" description="Cystathionine gamma-lyase">
    <location>
        <begin position="1"/>
        <end position="405"/>
    </location>
</feature>
<feature type="binding site" evidence="1">
    <location>
        <position position="62"/>
    </location>
    <ligand>
        <name>substrate</name>
    </ligand>
</feature>
<feature type="binding site" evidence="1">
    <location>
        <position position="114"/>
    </location>
    <ligand>
        <name>substrate</name>
    </ligand>
</feature>
<feature type="binding site" evidence="1">
    <location>
        <position position="119"/>
    </location>
    <ligand>
        <name>substrate</name>
    </ligand>
</feature>
<feature type="binding site" evidence="1">
    <location>
        <position position="339"/>
    </location>
    <ligand>
        <name>substrate</name>
    </ligand>
</feature>
<feature type="modified residue" description="N6-(pyridoxal phosphate)lysine" evidence="3">
    <location>
        <position position="212"/>
    </location>
</feature>
<organism>
    <name type="scientific">Sus scrofa</name>
    <name type="common">Pig</name>
    <dbReference type="NCBI Taxonomy" id="9823"/>
    <lineage>
        <taxon>Eukaryota</taxon>
        <taxon>Metazoa</taxon>
        <taxon>Chordata</taxon>
        <taxon>Craniata</taxon>
        <taxon>Vertebrata</taxon>
        <taxon>Euteleostomi</taxon>
        <taxon>Mammalia</taxon>
        <taxon>Eutheria</taxon>
        <taxon>Laurasiatheria</taxon>
        <taxon>Artiodactyla</taxon>
        <taxon>Suina</taxon>
        <taxon>Suidae</taxon>
        <taxon>Sus</taxon>
    </lineage>
</organism>
<evidence type="ECO:0000250" key="1"/>
<evidence type="ECO:0000250" key="2">
    <source>
        <dbReference type="UniProtKB" id="P18757"/>
    </source>
</evidence>
<evidence type="ECO:0000250" key="3">
    <source>
        <dbReference type="UniProtKB" id="P32929"/>
    </source>
</evidence>
<evidence type="ECO:0000250" key="4">
    <source>
        <dbReference type="UniProtKB" id="Q8VCN5"/>
    </source>
</evidence>
<evidence type="ECO:0000305" key="5"/>
<accession>Q19QT7</accession>
<sequence length="405" mass="44490">MQEKDVSSHGFLPRFQHFATQAIHAGQEPEQWASKAVVPPISLSTTFKQEAPGQHSGFEYSRSGNPTXNCLEKAVAVLDGAKYSLAFASGLAATVTITHLLKAGXQIISMDDVYGGTNRYFRQVAAEFGLKISFVDCSKSKLLEAAITPETKLVWIETPTNPILKMIDIEACAQIVHKHGDIILVVDNTFMSAYFQRPLALGADICMYSATKYMNGHSDVVMGLVSLNSETLHSRLRFLQNSLGAVPSPIDCYLCNRGLKTLQVRMEKHFENGMAVAQFLESHPLVEKVIYPGLPSHPQHELAKRQCTGCPGMISFYIKGSLHHAETFLKSLKLFTLAESLGGYESLAELPAIMTHSSVPKSDREVLGIRDTLIRLSVGLEDKQDLMDDLDQALKAAHPTNASHN</sequence>
<dbReference type="EC" id="4.4.1.1"/>
<dbReference type="EC" id="4.4.1.2" evidence="3"/>
<dbReference type="EMBL" id="DQ499449">
    <property type="protein sequence ID" value="ABF72039.1"/>
    <property type="molecule type" value="mRNA"/>
</dbReference>
<dbReference type="RefSeq" id="NP_001038050.1">
    <property type="nucleotide sequence ID" value="NM_001044585.1"/>
</dbReference>
<dbReference type="FunCoup" id="Q19QT7">
    <property type="interactions" value="407"/>
</dbReference>
<dbReference type="STRING" id="9823.ENSSSCP00000004099"/>
<dbReference type="PaxDb" id="9823-ENSSSCP00000004099"/>
<dbReference type="PeptideAtlas" id="Q19QT7"/>
<dbReference type="GeneID" id="733654"/>
<dbReference type="KEGG" id="ssc:733654"/>
<dbReference type="CTD" id="1491"/>
<dbReference type="eggNOG" id="KOG0053">
    <property type="taxonomic scope" value="Eukaryota"/>
</dbReference>
<dbReference type="InParanoid" id="Q19QT7"/>
<dbReference type="OrthoDB" id="3512640at2759"/>
<dbReference type="UniPathway" id="UPA00136">
    <property type="reaction ID" value="UER00202"/>
</dbReference>
<dbReference type="Proteomes" id="UP000008227">
    <property type="component" value="Unplaced"/>
</dbReference>
<dbReference type="Proteomes" id="UP000314985">
    <property type="component" value="Unplaced"/>
</dbReference>
<dbReference type="Proteomes" id="UP000694570">
    <property type="component" value="Unplaced"/>
</dbReference>
<dbReference type="Proteomes" id="UP000694571">
    <property type="component" value="Unplaced"/>
</dbReference>
<dbReference type="Proteomes" id="UP000694720">
    <property type="component" value="Unplaced"/>
</dbReference>
<dbReference type="Proteomes" id="UP000694722">
    <property type="component" value="Unplaced"/>
</dbReference>
<dbReference type="Proteomes" id="UP000694723">
    <property type="component" value="Unplaced"/>
</dbReference>
<dbReference type="Proteomes" id="UP000694724">
    <property type="component" value="Unplaced"/>
</dbReference>
<dbReference type="Proteomes" id="UP000694725">
    <property type="component" value="Unplaced"/>
</dbReference>
<dbReference type="Proteomes" id="UP000694726">
    <property type="component" value="Unplaced"/>
</dbReference>
<dbReference type="Proteomes" id="UP000694727">
    <property type="component" value="Unplaced"/>
</dbReference>
<dbReference type="Proteomes" id="UP000694728">
    <property type="component" value="Unplaced"/>
</dbReference>
<dbReference type="GO" id="GO:0005737">
    <property type="term" value="C:cytoplasm"/>
    <property type="evidence" value="ECO:0000318"/>
    <property type="project" value="GO_Central"/>
</dbReference>
<dbReference type="GO" id="GO:0005516">
    <property type="term" value="F:calmodulin binding"/>
    <property type="evidence" value="ECO:0007669"/>
    <property type="project" value="UniProtKB-KW"/>
</dbReference>
<dbReference type="GO" id="GO:0004123">
    <property type="term" value="F:cystathionine gamma-lyase activity"/>
    <property type="evidence" value="ECO:0000250"/>
    <property type="project" value="UniProtKB"/>
</dbReference>
<dbReference type="GO" id="GO:0047982">
    <property type="term" value="F:homocysteine desulfhydrase activity"/>
    <property type="evidence" value="ECO:0007669"/>
    <property type="project" value="RHEA"/>
</dbReference>
<dbReference type="GO" id="GO:0080146">
    <property type="term" value="F:L-cysteine desulfhydrase activity"/>
    <property type="evidence" value="ECO:0007669"/>
    <property type="project" value="RHEA"/>
</dbReference>
<dbReference type="GO" id="GO:0044540">
    <property type="term" value="F:L-cystine L-cysteine-lyase (deaminating)"/>
    <property type="evidence" value="ECO:0000250"/>
    <property type="project" value="UniProtKB"/>
</dbReference>
<dbReference type="GO" id="GO:0030170">
    <property type="term" value="F:pyridoxal phosphate binding"/>
    <property type="evidence" value="ECO:0000250"/>
    <property type="project" value="UniProtKB"/>
</dbReference>
<dbReference type="GO" id="GO:0098606">
    <property type="term" value="F:selenocystathionine gamma-lyase activity"/>
    <property type="evidence" value="ECO:0007669"/>
    <property type="project" value="RHEA"/>
</dbReference>
<dbReference type="GO" id="GO:0019344">
    <property type="term" value="P:cysteine biosynthetic process"/>
    <property type="evidence" value="ECO:0000250"/>
    <property type="project" value="UniProtKB"/>
</dbReference>
<dbReference type="GO" id="GO:0019343">
    <property type="term" value="P:cysteine biosynthetic process via cystathionine"/>
    <property type="evidence" value="ECO:0000318"/>
    <property type="project" value="GO_Central"/>
</dbReference>
<dbReference type="GO" id="GO:0070814">
    <property type="term" value="P:hydrogen sulfide biosynthetic process"/>
    <property type="evidence" value="ECO:0000250"/>
    <property type="project" value="UniProtKB"/>
</dbReference>
<dbReference type="GO" id="GO:0006629">
    <property type="term" value="P:lipid metabolic process"/>
    <property type="evidence" value="ECO:0007669"/>
    <property type="project" value="UniProtKB-KW"/>
</dbReference>
<dbReference type="GO" id="GO:0043066">
    <property type="term" value="P:negative regulation of apoptotic process"/>
    <property type="evidence" value="ECO:0000250"/>
    <property type="project" value="UniProtKB"/>
</dbReference>
<dbReference type="GO" id="GO:0043123">
    <property type="term" value="P:positive regulation of canonical NF-kappaB signal transduction"/>
    <property type="evidence" value="ECO:0000250"/>
    <property type="project" value="UniProtKB"/>
</dbReference>
<dbReference type="GO" id="GO:0051092">
    <property type="term" value="P:positive regulation of NF-kappaB transcription factor activity"/>
    <property type="evidence" value="ECO:0000250"/>
    <property type="project" value="UniProtKB"/>
</dbReference>
<dbReference type="GO" id="GO:0044524">
    <property type="term" value="P:protein sulfhydration"/>
    <property type="evidence" value="ECO:0000250"/>
    <property type="project" value="UniProtKB"/>
</dbReference>
<dbReference type="GO" id="GO:0018272">
    <property type="term" value="P:protein-pyridoxal-5-phosphate linkage via peptidyl-N6-pyridoxal phosphate-L-lysine"/>
    <property type="evidence" value="ECO:0000250"/>
    <property type="project" value="UniProtKB"/>
</dbReference>
<dbReference type="GO" id="GO:0019346">
    <property type="term" value="P:transsulfuration"/>
    <property type="evidence" value="ECO:0000318"/>
    <property type="project" value="GO_Central"/>
</dbReference>
<dbReference type="CDD" id="cd00614">
    <property type="entry name" value="CGS_like"/>
    <property type="match status" value="1"/>
</dbReference>
<dbReference type="FunFam" id="3.90.1150.10:FF:000008">
    <property type="entry name" value="Cystathionine gamma-synthase"/>
    <property type="match status" value="1"/>
</dbReference>
<dbReference type="FunFam" id="3.40.640.10:FF:000009">
    <property type="entry name" value="Cystathionine gamma-synthase homolog"/>
    <property type="match status" value="1"/>
</dbReference>
<dbReference type="Gene3D" id="3.90.1150.10">
    <property type="entry name" value="Aspartate Aminotransferase, domain 1"/>
    <property type="match status" value="1"/>
</dbReference>
<dbReference type="Gene3D" id="3.40.640.10">
    <property type="entry name" value="Type I PLP-dependent aspartate aminotransferase-like (Major domain)"/>
    <property type="match status" value="1"/>
</dbReference>
<dbReference type="InterPro" id="IPR000277">
    <property type="entry name" value="Cys/Met-Metab_PyrdxlP-dep_enz"/>
</dbReference>
<dbReference type="InterPro" id="IPR054542">
    <property type="entry name" value="Cys_met_metab_PP"/>
</dbReference>
<dbReference type="InterPro" id="IPR015424">
    <property type="entry name" value="PyrdxlP-dep_Trfase"/>
</dbReference>
<dbReference type="InterPro" id="IPR015421">
    <property type="entry name" value="PyrdxlP-dep_Trfase_major"/>
</dbReference>
<dbReference type="InterPro" id="IPR015422">
    <property type="entry name" value="PyrdxlP-dep_Trfase_small"/>
</dbReference>
<dbReference type="PANTHER" id="PTHR11808:SF15">
    <property type="entry name" value="CYSTATHIONINE GAMMA-LYASE"/>
    <property type="match status" value="1"/>
</dbReference>
<dbReference type="PANTHER" id="PTHR11808">
    <property type="entry name" value="TRANS-SULFURATION ENZYME FAMILY MEMBER"/>
    <property type="match status" value="1"/>
</dbReference>
<dbReference type="Pfam" id="PF01053">
    <property type="entry name" value="Cys_Met_Meta_PP"/>
    <property type="match status" value="1"/>
</dbReference>
<dbReference type="PIRSF" id="PIRSF001434">
    <property type="entry name" value="CGS"/>
    <property type="match status" value="1"/>
</dbReference>
<dbReference type="SUPFAM" id="SSF53383">
    <property type="entry name" value="PLP-dependent transferases"/>
    <property type="match status" value="1"/>
</dbReference>
<dbReference type="PROSITE" id="PS00868">
    <property type="entry name" value="CYS_MET_METAB_PP"/>
    <property type="match status" value="1"/>
</dbReference>
<proteinExistence type="evidence at transcript level"/>
<comment type="function">
    <text evidence="2 3 4">Catalyzes the last step in the trans-sulfuration pathway from L-methionine to L-cysteine in a pyridoxal-5'-phosphate (PLP)-dependent manner, which consists on cleaving the L,L-cystathionine molecule into L-cysteine, ammonia and 2-oxobutanoate. Part of the L-cysteine derived from the trans-sulfuration pathway is utilized for biosynthesis of the ubiquitous antioxidant glutathione. Besides its role in the conversion of L-cystathionine into L-cysteine, it utilizes L-cysteine and L-homocysteine as substrates (at much lower rates than L,L-cystathionine) to produce hydrogen sulfide (H2S). In vitro, it converts two L-cysteine molecules into lanthionine and H2S, and two L-homocysteine molecules to homolanthionine and H2S, which can be particularly relevant under conditions of severe hyperhomocysteinemia. Lanthionine and homolanthionine are structural homologs of L,L-cystathionine that differ by the absence or presence of an extra methylene group, respectively. Acts as a cysteine-protein sulfhydrase by mediating sulfhydration of target proteins: sulfhydration consists of converting -SH groups into -SSH on specific cysteine residues of target proteins such as GAPDH, PTPN1 and NF-kappa-B subunit RELA, thereby regulating their function. By generating the gasotransmitter H2S, it participates in a number of physiological processes such as vasodilation, bone protection, and inflammation (By similarity). Plays an essential role in myogenesis by contributing to the biogenesis of H2S in skeletal muscle tissue (By similarity). Can also accept homoserine as substrate (By similarity). Catalyzes the elimination of selenocystathionine (which can be derived from the diet) to yield selenocysteine, ammonia and 2-oxobutanoate (By similarity).</text>
</comment>
<comment type="catalytic activity">
    <reaction evidence="3">
        <text>L,L-cystathionine + H2O = 2-oxobutanoate + L-cysteine + NH4(+)</text>
        <dbReference type="Rhea" id="RHEA:14005"/>
        <dbReference type="ChEBI" id="CHEBI:15377"/>
        <dbReference type="ChEBI" id="CHEBI:16763"/>
        <dbReference type="ChEBI" id="CHEBI:28938"/>
        <dbReference type="ChEBI" id="CHEBI:35235"/>
        <dbReference type="ChEBI" id="CHEBI:58161"/>
        <dbReference type="EC" id="4.4.1.1"/>
    </reaction>
    <physiologicalReaction direction="left-to-right" evidence="3">
        <dbReference type="Rhea" id="RHEA:14006"/>
    </physiologicalReaction>
</comment>
<comment type="catalytic activity">
    <reaction evidence="3">
        <text>L-cysteine + H2O = hydrogen sulfide + pyruvate + NH4(+) + H(+)</text>
        <dbReference type="Rhea" id="RHEA:24931"/>
        <dbReference type="ChEBI" id="CHEBI:15361"/>
        <dbReference type="ChEBI" id="CHEBI:15377"/>
        <dbReference type="ChEBI" id="CHEBI:15378"/>
        <dbReference type="ChEBI" id="CHEBI:28938"/>
        <dbReference type="ChEBI" id="CHEBI:29919"/>
        <dbReference type="ChEBI" id="CHEBI:35235"/>
        <dbReference type="EC" id="4.4.1.1"/>
    </reaction>
    <physiologicalReaction direction="left-to-right" evidence="3">
        <dbReference type="Rhea" id="RHEA:24932"/>
    </physiologicalReaction>
</comment>
<comment type="catalytic activity">
    <reaction evidence="3">
        <text>L-homocysteine + H2O = 2-oxobutanoate + hydrogen sulfide + NH4(+) + H(+)</text>
        <dbReference type="Rhea" id="RHEA:14501"/>
        <dbReference type="ChEBI" id="CHEBI:15377"/>
        <dbReference type="ChEBI" id="CHEBI:15378"/>
        <dbReference type="ChEBI" id="CHEBI:16763"/>
        <dbReference type="ChEBI" id="CHEBI:28938"/>
        <dbReference type="ChEBI" id="CHEBI:29919"/>
        <dbReference type="ChEBI" id="CHEBI:58199"/>
        <dbReference type="EC" id="4.4.1.2"/>
    </reaction>
    <physiologicalReaction direction="left-to-right" evidence="3">
        <dbReference type="Rhea" id="RHEA:14502"/>
    </physiologicalReaction>
</comment>
<comment type="catalytic activity">
    <reaction evidence="2">
        <text>L-homoserine = 2-oxobutanoate + NH4(+)</text>
        <dbReference type="Rhea" id="RHEA:24923"/>
        <dbReference type="ChEBI" id="CHEBI:16763"/>
        <dbReference type="ChEBI" id="CHEBI:28938"/>
        <dbReference type="ChEBI" id="CHEBI:57476"/>
        <dbReference type="EC" id="4.4.1.1"/>
    </reaction>
    <physiologicalReaction direction="left-to-right" evidence="2">
        <dbReference type="Rhea" id="RHEA:24924"/>
    </physiologicalReaction>
</comment>
<comment type="catalytic activity">
    <reaction evidence="2">
        <text>L-selenocystathionine + H2O = L-selenocysteine + 2-oxobutanoate + NH4(+)</text>
        <dbReference type="Rhea" id="RHEA:31151"/>
        <dbReference type="ChEBI" id="CHEBI:15377"/>
        <dbReference type="ChEBI" id="CHEBI:16763"/>
        <dbReference type="ChEBI" id="CHEBI:28938"/>
        <dbReference type="ChEBI" id="CHEBI:57843"/>
        <dbReference type="ChEBI" id="CHEBI:62226"/>
    </reaction>
    <physiologicalReaction direction="left-to-right" evidence="2">
        <dbReference type="Rhea" id="RHEA:31152"/>
    </physiologicalReaction>
</comment>
<comment type="cofactor">
    <cofactor evidence="3">
        <name>pyridoxal 5'-phosphate</name>
        <dbReference type="ChEBI" id="CHEBI:597326"/>
    </cofactor>
</comment>
<comment type="pathway">
    <text evidence="3">Amino-acid biosynthesis; L-cysteine biosynthesis; L-cysteine from L-homocysteine and L-serine: step 2/2.</text>
</comment>
<comment type="subunit">
    <text evidence="3 4">Homotetramer (By similarity). Interacts with CALM in a calcium-dependent manner (By similarity).</text>
</comment>
<comment type="subcellular location">
    <subcellularLocation>
        <location evidence="1">Cytoplasm</location>
    </subcellularLocation>
</comment>
<comment type="similarity">
    <text evidence="5">Belongs to the trans-sulfuration enzymes family.</text>
</comment>
<keyword id="KW-0028">Amino-acid biosynthesis</keyword>
<keyword id="KW-0112">Calmodulin-binding</keyword>
<keyword id="KW-0198">Cysteine biosynthesis</keyword>
<keyword id="KW-0963">Cytoplasm</keyword>
<keyword id="KW-0443">Lipid metabolism</keyword>
<keyword id="KW-0456">Lyase</keyword>
<keyword id="KW-0663">Pyridoxal phosphate</keyword>
<keyword id="KW-1185">Reference proteome</keyword>
<name>CGL_PIG</name>